<name>3L24_DENPO</name>
<feature type="chain" id="PRO_0000430751" description="Alpha-elapitoxin-Dpp2d" evidence="2">
    <location>
        <begin position="1"/>
        <end position="72"/>
    </location>
</feature>
<feature type="modified residue" description="Arginine amide" evidence="2">
    <location>
        <position position="72"/>
    </location>
</feature>
<feature type="disulfide bond" evidence="2 6">
    <location>
        <begin position="3"/>
        <end position="21"/>
    </location>
</feature>
<feature type="disulfide bond" evidence="2 6">
    <location>
        <begin position="14"/>
        <end position="42"/>
    </location>
</feature>
<feature type="disulfide bond" evidence="2 6">
    <location>
        <begin position="27"/>
        <end position="31"/>
    </location>
</feature>
<feature type="disulfide bond" evidence="2 6">
    <location>
        <begin position="46"/>
        <end position="57"/>
    </location>
</feature>
<feature type="disulfide bond" evidence="2 6">
    <location>
        <begin position="58"/>
        <end position="63"/>
    </location>
</feature>
<feature type="strand" evidence="7">
    <location>
        <begin position="20"/>
        <end position="26"/>
    </location>
</feature>
<feature type="helix" evidence="7">
    <location>
        <begin position="31"/>
        <end position="34"/>
    </location>
</feature>
<feature type="strand" evidence="7">
    <location>
        <begin position="37"/>
        <end position="46"/>
    </location>
</feature>
<feature type="strand" evidence="7">
    <location>
        <begin position="54"/>
        <end position="58"/>
    </location>
</feature>
<accession>C0HJD7</accession>
<comment type="function">
    <text evidence="1 2">Binds with high affinity to muscular (IC(50)=114 nM) and neuronal (alpha-7/CHRNA7) (IC(50)=58 nM) nicotinic acetylcholine receptor (nAChR) and inhibits acetylcholine from binding to the receptor, thereby impairing neuromuscular and neuronal transmission. Competitive radioligand binding assays also demonstrate that this toxin competes with epibatidine binding to the Lymnaea stagnalis acetylcholine-binding protein (Ls-AChBP) (IC(50)=4.9 nM).</text>
</comment>
<comment type="subunit">
    <text evidence="3">Monomer (predominant).</text>
</comment>
<comment type="subcellular location">
    <subcellularLocation>
        <location evidence="2">Secreted</location>
    </subcellularLocation>
</comment>
<comment type="tissue specificity">
    <text evidence="5">Expressed by the venom gland.</text>
</comment>
<comment type="PTM">
    <text evidence="2">Amidation does not significantly affect toxin selectivity, since the activity profile and binding data are reminiscent of classical long-chain 3-finger toxins with a free carboxyl termini.</text>
</comment>
<comment type="mass spectrometry" mass="7985.33" error="0.4" method="Electrospray" evidence="2">
    <text>Monoisotopic mass.</text>
</comment>
<comment type="miscellaneous">
    <text evidence="2">Negative results: does not affect alpha-3/beta-2 (CHRNA3/CHRNB2) and alpha-3/beta-4 (CHRNA3/CHRNB4) nAChRs at 1 uM concentrations.</text>
</comment>
<comment type="similarity">
    <text evidence="4">Belongs to the three-finger toxin family. Long-chain subfamily. Type II alpha-neurotoxin sub-subfamily.</text>
</comment>
<proteinExistence type="evidence at protein level"/>
<dbReference type="PDB" id="4LFT">
    <property type="method" value="X-ray"/>
    <property type="resolution" value="1.70 A"/>
    <property type="chains" value="A/B=1-72"/>
</dbReference>
<dbReference type="PDB" id="8DA0">
    <property type="method" value="X-ray"/>
    <property type="resolution" value="2.20 A"/>
    <property type="chains" value="E/F=1-72"/>
</dbReference>
<dbReference type="PDBsum" id="4LFT"/>
<dbReference type="PDBsum" id="8DA0"/>
<dbReference type="SMR" id="C0HJD7"/>
<dbReference type="GO" id="GO:0005576">
    <property type="term" value="C:extracellular region"/>
    <property type="evidence" value="ECO:0007669"/>
    <property type="project" value="UniProtKB-SubCell"/>
</dbReference>
<dbReference type="GO" id="GO:0030550">
    <property type="term" value="F:acetylcholine receptor inhibitor activity"/>
    <property type="evidence" value="ECO:0007669"/>
    <property type="project" value="UniProtKB-KW"/>
</dbReference>
<dbReference type="GO" id="GO:0099106">
    <property type="term" value="F:ion channel regulator activity"/>
    <property type="evidence" value="ECO:0007669"/>
    <property type="project" value="UniProtKB-KW"/>
</dbReference>
<dbReference type="GO" id="GO:0090729">
    <property type="term" value="F:toxin activity"/>
    <property type="evidence" value="ECO:0007669"/>
    <property type="project" value="UniProtKB-KW"/>
</dbReference>
<dbReference type="CDD" id="cd00206">
    <property type="entry name" value="TFP_snake_toxin"/>
    <property type="match status" value="1"/>
</dbReference>
<dbReference type="Gene3D" id="2.10.60.10">
    <property type="entry name" value="CD59"/>
    <property type="match status" value="1"/>
</dbReference>
<dbReference type="InterPro" id="IPR003571">
    <property type="entry name" value="Snake_3FTx"/>
</dbReference>
<dbReference type="InterPro" id="IPR045860">
    <property type="entry name" value="Snake_toxin-like_sf"/>
</dbReference>
<dbReference type="InterPro" id="IPR018354">
    <property type="entry name" value="Snake_toxin_con_site"/>
</dbReference>
<dbReference type="InterPro" id="IPR054131">
    <property type="entry name" value="Toxin_cobra-type"/>
</dbReference>
<dbReference type="Pfam" id="PF21947">
    <property type="entry name" value="Toxin_cobra-type"/>
    <property type="match status" value="1"/>
</dbReference>
<dbReference type="SUPFAM" id="SSF57302">
    <property type="entry name" value="Snake toxin-like"/>
    <property type="match status" value="1"/>
</dbReference>
<dbReference type="PROSITE" id="PS00272">
    <property type="entry name" value="SNAKE_TOXIN"/>
    <property type="match status" value="1"/>
</dbReference>
<protein>
    <recommendedName>
        <fullName evidence="3">Alpha-elapitoxin-Dpp2d</fullName>
        <shortName evidence="3">Alpha-EPTX-Dpp2d</shortName>
    </recommendedName>
</protein>
<reference key="1">
    <citation type="journal article" date="2014" name="Biochemistry">
        <title>Isolation and structural and pharmacological characterization of alpha-elapitoxin-Dpp2d, an amidated three finger toxin from black mamba venom.</title>
        <authorList>
            <person name="Wang C.I."/>
            <person name="Reeks T."/>
            <person name="Vetter I."/>
            <person name="Vergara I."/>
            <person name="Kovtun O."/>
            <person name="Lewis R.J."/>
            <person name="Alewood P.F."/>
            <person name="Durek T."/>
        </authorList>
    </citation>
    <scope>PROTEIN SEQUENCE</scope>
    <scope>MASS SPECTROMETRY</scope>
    <scope>FUNCTION</scope>
    <scope>X-RAY CRYSTALLOGRAPHY (1.7 ANGSTROMS)</scope>
    <scope>AMIDATION AT ARG-72</scope>
    <scope>SUBCELLULAR LOCATION</scope>
    <scope>SUBUNIT</scope>
    <source>
        <tissue>Venom</tissue>
    </source>
</reference>
<sequence length="72" mass="8002">RTCNKTFSDQSKICPPGENICYTKTWCDAFCSQRGKRVELGCAATCPKVKAGVEIKCCSTDNCNKFQFGKPR</sequence>
<keyword id="KW-0002">3D-structure</keyword>
<keyword id="KW-0008">Acetylcholine receptor inhibiting toxin</keyword>
<keyword id="KW-0027">Amidation</keyword>
<keyword id="KW-0903">Direct protein sequencing</keyword>
<keyword id="KW-1015">Disulfide bond</keyword>
<keyword id="KW-0872">Ion channel impairing toxin</keyword>
<keyword id="KW-0528">Neurotoxin</keyword>
<keyword id="KW-0629">Postsynaptic neurotoxin</keyword>
<keyword id="KW-0964">Secreted</keyword>
<keyword id="KW-0800">Toxin</keyword>
<organism>
    <name type="scientific">Dendroaspis polylepis polylepis</name>
    <name type="common">Black mamba</name>
    <dbReference type="NCBI Taxonomy" id="8620"/>
    <lineage>
        <taxon>Eukaryota</taxon>
        <taxon>Metazoa</taxon>
        <taxon>Chordata</taxon>
        <taxon>Craniata</taxon>
        <taxon>Vertebrata</taxon>
        <taxon>Euteleostomi</taxon>
        <taxon>Lepidosauria</taxon>
        <taxon>Squamata</taxon>
        <taxon>Bifurcata</taxon>
        <taxon>Unidentata</taxon>
        <taxon>Episquamata</taxon>
        <taxon>Toxicofera</taxon>
        <taxon>Serpentes</taxon>
        <taxon>Colubroidea</taxon>
        <taxon>Elapidae</taxon>
        <taxon>Elapinae</taxon>
        <taxon>Dendroaspis</taxon>
    </lineage>
</organism>
<evidence type="ECO:0000250" key="1">
    <source>
        <dbReference type="UniProtKB" id="P60615"/>
    </source>
</evidence>
<evidence type="ECO:0000269" key="2">
    <source>
    </source>
</evidence>
<evidence type="ECO:0000303" key="3">
    <source>
    </source>
</evidence>
<evidence type="ECO:0000305" key="4"/>
<evidence type="ECO:0000305" key="5">
    <source>
    </source>
</evidence>
<evidence type="ECO:0000312" key="6">
    <source>
        <dbReference type="PDB" id="4LFT"/>
    </source>
</evidence>
<evidence type="ECO:0007829" key="7">
    <source>
        <dbReference type="PDB" id="8DA0"/>
    </source>
</evidence>